<sequence>MGTAALLILLAGVSWAQREVAIQPGPLYRAEGSQISIWCNVRGYQGPSEQNFLWSIYLPTAPEKEIQIVGTNDPSFSYAIYSQRVRSGGIYVERVSGDRALLHIRQLQDQDTGEYECHTPNTDPSYHGSYSAKVNLQVIPDTLTVSSPAQTIQKVEGGSLQVTCEVSQNSSRHTHLSVSWLRLSEGEATEIISVTQNFSVRPGPSYAQKHSVGDVRLDKVGDSTFRLTLYNLHPSDQGDIYCEGTEWIQDPDGTWFPLTQKRSEGTSVTVLPTDKEFNVRLETERRTYNGGDTATLRCIIEAQNPGDRLFAVSWAFNSSLIASQSPGGVPSLTGEYARREDGGELRVGKDSDSVFSLKIFRLRPEDSGKYNCRVTERERGPSGELIDRESKRPKNIPISVLPLRTSLTVTVTANSSSVLEGVRLSLSCSVASLAGPQSRVSASWHLQDKQGRQRDVVRQDRDGVTWAGEQYRERLGTGGLRLLRSGSDTFSLELEGSQRTDAGSYECRVAEWVPAPDGEWQLLGERSAQANVDILALETGFAVTAITRTPGVTYFDSFDLQCILKPHYPPWVGVSVTWRFQPAGGGDTHDLVTFSRSGGVQWGERAGSFRGRSIVEKGDSTHTVRLSVSRASDSEAGKYQCVAELWRRETSGMWARLAERASNLLEIRVQRPVPRLQVTKVTRTLSVVEGSPVTLSCSIRSQSGPDSRFAVLWLVQQPSGAEGKLIGRSDAGTEFGTYPEGALLKGRLQLGVTAPGQYALTLQGARTDDSGSYYCQVEEWAMDPNQAWYRLAEETSGLTEIRVRPPDANLQLDQLPRNVSALEGQSVTVTCHVLNRTLPDSRLSLEWLCWRAGHMERRGLARLTVDGVLGSVEEEPGDVAPGLPSRVQVSQPSLGLYALTLRGTEVRDSGTYSCLVQEWLRDPRGQWYRRTEERSGATYVSVRQPDPQLQLDPSLLNVSVMEGGHFDLDCMVSSRSRPDSQLAISWSLQGTSRGAEPETLLNVDRSGVWAPLAPRWEGRLQQLQLSPTLFRLHVPRVGPGDSGNYTCLVQEWLLGPRGDWYLLAQDEAVIGWIRVQRKESNLQSTICANDALFYLVFFYPFPIFGILIITILLVRFRHRPTGKPGEGKNGVPLLWIKEPHLNYSPTCLEPPVLSIHPGTID</sequence>
<evidence type="ECO:0000255" key="1"/>
<evidence type="ECO:0000255" key="2">
    <source>
        <dbReference type="PROSITE-ProRule" id="PRU00114"/>
    </source>
</evidence>
<evidence type="ECO:0000305" key="3"/>
<accession>A0JPB1</accession>
<gene>
    <name type="primary">igsf3</name>
</gene>
<dbReference type="EMBL" id="BC127336">
    <property type="protein sequence ID" value="AAI27337.1"/>
    <property type="molecule type" value="mRNA"/>
</dbReference>
<dbReference type="RefSeq" id="NP_001090681.1">
    <property type="nucleotide sequence ID" value="NM_001097212.1"/>
</dbReference>
<dbReference type="FunCoup" id="A0JPB1">
    <property type="interactions" value="394"/>
</dbReference>
<dbReference type="DNASU" id="100036654"/>
<dbReference type="GeneID" id="100036654"/>
<dbReference type="KEGG" id="xtr:100036654"/>
<dbReference type="AGR" id="Xenbase:XB-GENE-18006038"/>
<dbReference type="CTD" id="3321"/>
<dbReference type="Xenbase" id="XB-GENE-18006038">
    <property type="gene designation" value="igsf3"/>
</dbReference>
<dbReference type="InParanoid" id="A0JPB1"/>
<dbReference type="OMA" id="PVSVVWQ"/>
<dbReference type="OrthoDB" id="9890427at2759"/>
<dbReference type="Reactome" id="R-XTR-202433">
    <property type="pathway name" value="Generation of second messenger molecules"/>
</dbReference>
<dbReference type="Proteomes" id="UP000008143">
    <property type="component" value="Chromosome 2"/>
</dbReference>
<dbReference type="GO" id="GO:0016020">
    <property type="term" value="C:membrane"/>
    <property type="evidence" value="ECO:0007669"/>
    <property type="project" value="UniProtKB-SubCell"/>
</dbReference>
<dbReference type="CDD" id="cd00099">
    <property type="entry name" value="IgV"/>
    <property type="match status" value="3"/>
</dbReference>
<dbReference type="FunFam" id="2.60.40.10:FF:003318">
    <property type="match status" value="2"/>
</dbReference>
<dbReference type="FunFam" id="2.60.40.10:FF:000191">
    <property type="entry name" value="Immunoglobulin superfamily member 3"/>
    <property type="match status" value="1"/>
</dbReference>
<dbReference type="FunFam" id="2.60.40.10:FF:000689">
    <property type="entry name" value="Immunoglobulin superfamily member 3"/>
    <property type="match status" value="1"/>
</dbReference>
<dbReference type="FunFam" id="2.60.40.10:FF:003319">
    <property type="entry name" value="Immunoglobulin superfamily member 3"/>
    <property type="match status" value="1"/>
</dbReference>
<dbReference type="FunFam" id="2.60.40.10:FF:000604">
    <property type="entry name" value="immunoglobulin superfamily member 3"/>
    <property type="match status" value="1"/>
</dbReference>
<dbReference type="FunFam" id="2.60.40.10:FF:000491">
    <property type="entry name" value="Immunoglobulin superfamily, member 3"/>
    <property type="match status" value="2"/>
</dbReference>
<dbReference type="Gene3D" id="2.60.40.10">
    <property type="entry name" value="Immunoglobulins"/>
    <property type="match status" value="8"/>
</dbReference>
<dbReference type="InterPro" id="IPR007110">
    <property type="entry name" value="Ig-like_dom"/>
</dbReference>
<dbReference type="InterPro" id="IPR036179">
    <property type="entry name" value="Ig-like_dom_sf"/>
</dbReference>
<dbReference type="InterPro" id="IPR013783">
    <property type="entry name" value="Ig-like_fold"/>
</dbReference>
<dbReference type="InterPro" id="IPR003599">
    <property type="entry name" value="Ig_sub"/>
</dbReference>
<dbReference type="InterPro" id="IPR003598">
    <property type="entry name" value="Ig_sub2"/>
</dbReference>
<dbReference type="InterPro" id="IPR013106">
    <property type="entry name" value="Ig_V-set"/>
</dbReference>
<dbReference type="InterPro" id="IPR051102">
    <property type="entry name" value="IgSF_V-set/TM_domain"/>
</dbReference>
<dbReference type="PANTHER" id="PTHR12207:SF34">
    <property type="entry name" value="IMMUNOGLOBULIN SUPERFAMILY MEMBER 3"/>
    <property type="match status" value="1"/>
</dbReference>
<dbReference type="PANTHER" id="PTHR12207">
    <property type="entry name" value="V-SET AND TRANSMEMBRANE DOMAIN-CONTAINING PROTEIN"/>
    <property type="match status" value="1"/>
</dbReference>
<dbReference type="Pfam" id="PF07686">
    <property type="entry name" value="V-set"/>
    <property type="match status" value="5"/>
</dbReference>
<dbReference type="SMART" id="SM00409">
    <property type="entry name" value="IG"/>
    <property type="match status" value="8"/>
</dbReference>
<dbReference type="SMART" id="SM00408">
    <property type="entry name" value="IGc2"/>
    <property type="match status" value="5"/>
</dbReference>
<dbReference type="SMART" id="SM00406">
    <property type="entry name" value="IGv"/>
    <property type="match status" value="7"/>
</dbReference>
<dbReference type="SUPFAM" id="SSF48726">
    <property type="entry name" value="Immunoglobulin"/>
    <property type="match status" value="8"/>
</dbReference>
<dbReference type="PROSITE" id="PS50835">
    <property type="entry name" value="IG_LIKE"/>
    <property type="match status" value="7"/>
</dbReference>
<reference key="1">
    <citation type="submission" date="2006-11" db="EMBL/GenBank/DDBJ databases">
        <authorList>
            <consortium name="NIH - Xenopus Gene Collection (XGC) project"/>
        </authorList>
    </citation>
    <scope>NUCLEOTIDE SEQUENCE [LARGE SCALE MRNA]</scope>
    <source>
        <tissue>Testis</tissue>
    </source>
</reference>
<keyword id="KW-1015">Disulfide bond</keyword>
<keyword id="KW-0393">Immunoglobulin domain</keyword>
<keyword id="KW-0472">Membrane</keyword>
<keyword id="KW-1185">Reference proteome</keyword>
<keyword id="KW-0677">Repeat</keyword>
<keyword id="KW-0732">Signal</keyword>
<keyword id="KW-0812">Transmembrane</keyword>
<keyword id="KW-1133">Transmembrane helix</keyword>
<comment type="subcellular location">
    <subcellularLocation>
        <location evidence="3">Membrane</location>
        <topology evidence="3">Single-pass type I membrane protein</topology>
    </subcellularLocation>
</comment>
<feature type="signal peptide" evidence="1">
    <location>
        <begin position="1"/>
        <end position="16"/>
    </location>
</feature>
<feature type="chain" id="PRO_0000320137" description="Immunoglobulin superfamily member 3">
    <location>
        <begin position="17"/>
        <end position="1161"/>
    </location>
</feature>
<feature type="topological domain" description="Extracellular" evidence="1">
    <location>
        <begin position="17"/>
        <end position="1091"/>
    </location>
</feature>
<feature type="transmembrane region" description="Helical" evidence="1">
    <location>
        <begin position="1092"/>
        <end position="1112"/>
    </location>
</feature>
<feature type="topological domain" description="Cytoplasmic" evidence="1">
    <location>
        <begin position="1113"/>
        <end position="1161"/>
    </location>
</feature>
<feature type="domain" description="Ig-like C2-type 1">
    <location>
        <begin position="18"/>
        <end position="135"/>
    </location>
</feature>
<feature type="domain" description="Ig-like C2-type 2">
    <location>
        <begin position="140"/>
        <end position="258"/>
    </location>
</feature>
<feature type="domain" description="Ig-like C2-type 3">
    <location>
        <begin position="272"/>
        <end position="382"/>
    </location>
</feature>
<feature type="domain" description="Ig-like C2-type 4">
    <location>
        <begin position="402"/>
        <end position="523"/>
    </location>
</feature>
<feature type="domain" description="Ig-like C2-type 5">
    <location>
        <begin position="541"/>
        <end position="651"/>
    </location>
</feature>
<feature type="domain" description="Ig-like C2-type 6">
    <location>
        <begin position="674"/>
        <end position="796"/>
    </location>
</feature>
<feature type="domain" description="Ig-like C2-type 7">
    <location>
        <begin position="806"/>
        <end position="930"/>
    </location>
</feature>
<feature type="domain" description="Ig-like C2-type 8">
    <location>
        <begin position="947"/>
        <end position="1063"/>
    </location>
</feature>
<feature type="short sequence motif" description="EWI motif">
    <location>
        <begin position="246"/>
        <end position="248"/>
    </location>
</feature>
<feature type="disulfide bond" evidence="2">
    <location>
        <begin position="39"/>
        <end position="117"/>
    </location>
</feature>
<feature type="disulfide bond" evidence="2">
    <location>
        <begin position="164"/>
        <end position="242"/>
    </location>
</feature>
<feature type="disulfide bond" evidence="2">
    <location>
        <begin position="298"/>
        <end position="372"/>
    </location>
</feature>
<feature type="disulfide bond" evidence="2">
    <location>
        <begin position="428"/>
        <end position="507"/>
    </location>
</feature>
<feature type="disulfide bond" evidence="2">
    <location>
        <begin position="562"/>
        <end position="641"/>
    </location>
</feature>
<feature type="disulfide bond" evidence="2">
    <location>
        <begin position="697"/>
        <end position="775"/>
    </location>
</feature>
<feature type="disulfide bond" evidence="2">
    <location>
        <begin position="831"/>
        <end position="914"/>
    </location>
</feature>
<feature type="disulfide bond" evidence="2">
    <location>
        <begin position="970"/>
        <end position="1047"/>
    </location>
</feature>
<organism>
    <name type="scientific">Xenopus tropicalis</name>
    <name type="common">Western clawed frog</name>
    <name type="synonym">Silurana tropicalis</name>
    <dbReference type="NCBI Taxonomy" id="8364"/>
    <lineage>
        <taxon>Eukaryota</taxon>
        <taxon>Metazoa</taxon>
        <taxon>Chordata</taxon>
        <taxon>Craniata</taxon>
        <taxon>Vertebrata</taxon>
        <taxon>Euteleostomi</taxon>
        <taxon>Amphibia</taxon>
        <taxon>Batrachia</taxon>
        <taxon>Anura</taxon>
        <taxon>Pipoidea</taxon>
        <taxon>Pipidae</taxon>
        <taxon>Xenopodinae</taxon>
        <taxon>Xenopus</taxon>
        <taxon>Silurana</taxon>
    </lineage>
</organism>
<protein>
    <recommendedName>
        <fullName>Immunoglobulin superfamily member 3</fullName>
        <shortName>IgSF3</shortName>
    </recommendedName>
</protein>
<name>IGSF3_XENTR</name>
<proteinExistence type="evidence at transcript level"/>